<reference key="1">
    <citation type="submission" date="2006-09" db="EMBL/GenBank/DDBJ databases">
        <authorList>
            <consortium name="The Klebsiella pneumonia Genome Sequencing Project"/>
            <person name="McClelland M."/>
            <person name="Sanderson E.K."/>
            <person name="Spieth J."/>
            <person name="Clifton W.S."/>
            <person name="Latreille P."/>
            <person name="Sabo A."/>
            <person name="Pepin K."/>
            <person name="Bhonagiri V."/>
            <person name="Porwollik S."/>
            <person name="Ali J."/>
            <person name="Wilson R.K."/>
        </authorList>
    </citation>
    <scope>NUCLEOTIDE SEQUENCE [LARGE SCALE GENOMIC DNA]</scope>
    <source>
        <strain>ATCC 700721 / MGH 78578</strain>
    </source>
</reference>
<sequence>MESLAALYKNHIVTLQERTRDVLARFQMDALLIHSGELVNVFLDDHPYPFKVNPQFKAWVPVTQVPNCWLLVDGVNKPKLWFYLPVDYWHNVEPLPTSFWTEEIDVIALPKADGIGSQLPAARGNIGYIGPVPERALGLGIAADKINPKGVIDYLHYYRAYKTDYELACMREAQKSAVNGHRAAYEAFQSGMSEFDINQAYLTATGHRDTDVPYSNIVALNEHASVLHYTKLDHRAPAEMRSFLLDAGAEYNGYAADLTRTWAAHGDNDFAHLIKDVNDEQLALISTMKAGTSYIDYHIQFHQRIAKLLRKHQLVTDMSEEAMVENDLTGPFMPHGIGHPLGLQVHDVAGFMQDDTGTHLAAPSKYPYLRCTRIIEPRMVLTIEPGIYFIESLLAPWREGPFSKHFNWQKIDAMKPFGGIRIEDNVVIHENSIENMTRDLKLA</sequence>
<feature type="chain" id="PRO_1000067404" description="Xaa-Pro dipeptidase">
    <location>
        <begin position="1"/>
        <end position="443"/>
    </location>
</feature>
<feature type="binding site" evidence="1">
    <location>
        <position position="246"/>
    </location>
    <ligand>
        <name>Mn(2+)</name>
        <dbReference type="ChEBI" id="CHEBI:29035"/>
        <label>2</label>
    </ligand>
</feature>
<feature type="binding site" evidence="1">
    <location>
        <position position="257"/>
    </location>
    <ligand>
        <name>Mn(2+)</name>
        <dbReference type="ChEBI" id="CHEBI:29035"/>
        <label>1</label>
    </ligand>
</feature>
<feature type="binding site" evidence="1">
    <location>
        <position position="257"/>
    </location>
    <ligand>
        <name>Mn(2+)</name>
        <dbReference type="ChEBI" id="CHEBI:29035"/>
        <label>2</label>
    </ligand>
</feature>
<feature type="binding site" evidence="1">
    <location>
        <position position="339"/>
    </location>
    <ligand>
        <name>Mn(2+)</name>
        <dbReference type="ChEBI" id="CHEBI:29035"/>
        <label>1</label>
    </ligand>
</feature>
<feature type="binding site" evidence="1">
    <location>
        <position position="384"/>
    </location>
    <ligand>
        <name>Mn(2+)</name>
        <dbReference type="ChEBI" id="CHEBI:29035"/>
        <label>1</label>
    </ligand>
</feature>
<feature type="binding site" evidence="1">
    <location>
        <position position="423"/>
    </location>
    <ligand>
        <name>Mn(2+)</name>
        <dbReference type="ChEBI" id="CHEBI:29035"/>
        <label>1</label>
    </ligand>
</feature>
<feature type="binding site" evidence="1">
    <location>
        <position position="423"/>
    </location>
    <ligand>
        <name>Mn(2+)</name>
        <dbReference type="ChEBI" id="CHEBI:29035"/>
        <label>2</label>
    </ligand>
</feature>
<proteinExistence type="inferred from homology"/>
<gene>
    <name evidence="1" type="primary">pepQ</name>
    <name type="ordered locus">KPN78578_42850</name>
    <name type="ORF">KPN_04341</name>
</gene>
<evidence type="ECO:0000255" key="1">
    <source>
        <dbReference type="HAMAP-Rule" id="MF_01279"/>
    </source>
</evidence>
<protein>
    <recommendedName>
        <fullName evidence="1">Xaa-Pro dipeptidase</fullName>
        <shortName evidence="1">X-Pro dipeptidase</shortName>
        <ecNumber evidence="1">3.4.13.9</ecNumber>
    </recommendedName>
    <alternativeName>
        <fullName evidence="1">Imidodipeptidase</fullName>
    </alternativeName>
    <alternativeName>
        <fullName evidence="1">Proline dipeptidase</fullName>
        <shortName evidence="1">Prolidase</shortName>
    </alternativeName>
</protein>
<accession>A6TGM5</accession>
<name>PEPQ_KLEP7</name>
<keyword id="KW-0224">Dipeptidase</keyword>
<keyword id="KW-0378">Hydrolase</keyword>
<keyword id="KW-0464">Manganese</keyword>
<keyword id="KW-0479">Metal-binding</keyword>
<keyword id="KW-0482">Metalloprotease</keyword>
<keyword id="KW-0645">Protease</keyword>
<comment type="function">
    <text evidence="1">Splits dipeptides with a prolyl residue in the C-terminal position.</text>
</comment>
<comment type="catalytic activity">
    <reaction evidence="1">
        <text>Xaa-L-Pro dipeptide + H2O = an L-alpha-amino acid + L-proline</text>
        <dbReference type="Rhea" id="RHEA:76407"/>
        <dbReference type="ChEBI" id="CHEBI:15377"/>
        <dbReference type="ChEBI" id="CHEBI:59869"/>
        <dbReference type="ChEBI" id="CHEBI:60039"/>
        <dbReference type="ChEBI" id="CHEBI:195196"/>
        <dbReference type="EC" id="3.4.13.9"/>
    </reaction>
</comment>
<comment type="cofactor">
    <cofactor evidence="1">
        <name>Mn(2+)</name>
        <dbReference type="ChEBI" id="CHEBI:29035"/>
    </cofactor>
    <text evidence="1">Binds 2 manganese ions per subunit.</text>
</comment>
<comment type="similarity">
    <text evidence="1">Belongs to the peptidase M24B family. Bacterial-type prolidase subfamily.</text>
</comment>
<dbReference type="EC" id="3.4.13.9" evidence="1"/>
<dbReference type="EMBL" id="CP000647">
    <property type="protein sequence ID" value="ABR79709.1"/>
    <property type="molecule type" value="Genomic_DNA"/>
</dbReference>
<dbReference type="RefSeq" id="WP_004181656.1">
    <property type="nucleotide sequence ID" value="NC_009648.1"/>
</dbReference>
<dbReference type="SMR" id="A6TGM5"/>
<dbReference type="STRING" id="272620.KPN_04341"/>
<dbReference type="MEROPS" id="M24.003"/>
<dbReference type="jPOST" id="A6TGM5"/>
<dbReference type="PaxDb" id="272620-KPN_04341"/>
<dbReference type="EnsemblBacteria" id="ABR79709">
    <property type="protein sequence ID" value="ABR79709"/>
    <property type="gene ID" value="KPN_04341"/>
</dbReference>
<dbReference type="KEGG" id="kpn:KPN_04341"/>
<dbReference type="HOGENOM" id="CLU_050675_0_0_6"/>
<dbReference type="Proteomes" id="UP000000265">
    <property type="component" value="Chromosome"/>
</dbReference>
<dbReference type="GO" id="GO:0005829">
    <property type="term" value="C:cytosol"/>
    <property type="evidence" value="ECO:0007669"/>
    <property type="project" value="TreeGrafter"/>
</dbReference>
<dbReference type="GO" id="GO:0004177">
    <property type="term" value="F:aminopeptidase activity"/>
    <property type="evidence" value="ECO:0007669"/>
    <property type="project" value="TreeGrafter"/>
</dbReference>
<dbReference type="GO" id="GO:0046872">
    <property type="term" value="F:metal ion binding"/>
    <property type="evidence" value="ECO:0007669"/>
    <property type="project" value="UniProtKB-KW"/>
</dbReference>
<dbReference type="GO" id="GO:0008235">
    <property type="term" value="F:metalloexopeptidase activity"/>
    <property type="evidence" value="ECO:0007669"/>
    <property type="project" value="UniProtKB-UniRule"/>
</dbReference>
<dbReference type="GO" id="GO:0016795">
    <property type="term" value="F:phosphoric triester hydrolase activity"/>
    <property type="evidence" value="ECO:0007669"/>
    <property type="project" value="InterPro"/>
</dbReference>
<dbReference type="GO" id="GO:0102009">
    <property type="term" value="F:proline dipeptidase activity"/>
    <property type="evidence" value="ECO:0007669"/>
    <property type="project" value="UniProtKB-EC"/>
</dbReference>
<dbReference type="GO" id="GO:0006508">
    <property type="term" value="P:proteolysis"/>
    <property type="evidence" value="ECO:0007669"/>
    <property type="project" value="UniProtKB-KW"/>
</dbReference>
<dbReference type="CDD" id="cd01087">
    <property type="entry name" value="Prolidase"/>
    <property type="match status" value="1"/>
</dbReference>
<dbReference type="FunFam" id="3.40.350.10:FF:000002">
    <property type="entry name" value="Xaa-Pro dipeptidase"/>
    <property type="match status" value="1"/>
</dbReference>
<dbReference type="FunFam" id="3.90.230.10:FF:000006">
    <property type="entry name" value="Xaa-Pro dipeptidase"/>
    <property type="match status" value="1"/>
</dbReference>
<dbReference type="Gene3D" id="3.90.230.10">
    <property type="entry name" value="Creatinase/methionine aminopeptidase superfamily"/>
    <property type="match status" value="1"/>
</dbReference>
<dbReference type="Gene3D" id="3.40.350.10">
    <property type="entry name" value="Creatinase/prolidase N-terminal domain"/>
    <property type="match status" value="1"/>
</dbReference>
<dbReference type="HAMAP" id="MF_01279">
    <property type="entry name" value="X_Pro_dipeptid"/>
    <property type="match status" value="1"/>
</dbReference>
<dbReference type="InterPro" id="IPR029149">
    <property type="entry name" value="Creatin/AminoP/Spt16_N"/>
</dbReference>
<dbReference type="InterPro" id="IPR036005">
    <property type="entry name" value="Creatinase/aminopeptidase-like"/>
</dbReference>
<dbReference type="InterPro" id="IPR048819">
    <property type="entry name" value="PepQ_N"/>
</dbReference>
<dbReference type="InterPro" id="IPR000994">
    <property type="entry name" value="Pept_M24"/>
</dbReference>
<dbReference type="InterPro" id="IPR001131">
    <property type="entry name" value="Peptidase_M24B_aminopep-P_CS"/>
</dbReference>
<dbReference type="InterPro" id="IPR052433">
    <property type="entry name" value="X-Pro_dipept-like"/>
</dbReference>
<dbReference type="InterPro" id="IPR022846">
    <property type="entry name" value="X_Pro_dipept"/>
</dbReference>
<dbReference type="NCBIfam" id="NF010133">
    <property type="entry name" value="PRK13607.1"/>
    <property type="match status" value="1"/>
</dbReference>
<dbReference type="PANTHER" id="PTHR43226">
    <property type="entry name" value="XAA-PRO AMINOPEPTIDASE 3"/>
    <property type="match status" value="1"/>
</dbReference>
<dbReference type="PANTHER" id="PTHR43226:SF8">
    <property type="entry name" value="XAA-PRO DIPEPTIDASE"/>
    <property type="match status" value="1"/>
</dbReference>
<dbReference type="Pfam" id="PF21216">
    <property type="entry name" value="PepQ_N"/>
    <property type="match status" value="1"/>
</dbReference>
<dbReference type="Pfam" id="PF00557">
    <property type="entry name" value="Peptidase_M24"/>
    <property type="match status" value="1"/>
</dbReference>
<dbReference type="SUPFAM" id="SSF55920">
    <property type="entry name" value="Creatinase/aminopeptidase"/>
    <property type="match status" value="1"/>
</dbReference>
<dbReference type="PROSITE" id="PS00491">
    <property type="entry name" value="PROLINE_PEPTIDASE"/>
    <property type="match status" value="1"/>
</dbReference>
<organism>
    <name type="scientific">Klebsiella pneumoniae subsp. pneumoniae (strain ATCC 700721 / MGH 78578)</name>
    <dbReference type="NCBI Taxonomy" id="272620"/>
    <lineage>
        <taxon>Bacteria</taxon>
        <taxon>Pseudomonadati</taxon>
        <taxon>Pseudomonadota</taxon>
        <taxon>Gammaproteobacteria</taxon>
        <taxon>Enterobacterales</taxon>
        <taxon>Enterobacteriaceae</taxon>
        <taxon>Klebsiella/Raoultella group</taxon>
        <taxon>Klebsiella</taxon>
        <taxon>Klebsiella pneumoniae complex</taxon>
    </lineage>
</organism>